<sequence length="644" mass="70205">MPSKAENLRPSEPAPQPPEGRTLQGQLPGAPPAQRAGSPPDAPGSESPALACSTPATPSGEDPPARAAPIAPRPPARPRLERALSLDDKGWRRRRFRGSQEDLEARNGTSPSRGSVQSEGPGAPAHSCSPPCLSTSLQEIPKSRGVLSSERGSPSSGGNPLSGVASSSPNLPHRDAAVAGSSPRLPSLLPPRPPPALSLDIASDSLRTANKVDSDLADYKLRAQPLLVRAHSSLGPGRPRSPLACDDCSLRSAKSSFSLLAPIRSKDVRSRSYLEGSLLASGALLGADELARYFPDRNVALFVATWNMQGQKELPPSLDEFLLPAEADYAQDLYVIGVQEGCSDRREWETRLQETLGPHYVLLSSAAHGVLYMSLFIRRDLIWFCSEVECSTVTTRIVSQIKTKGALGISFTFFGTSFLFITSHFTSGDGKVAERLLDYTRTVQALVLPRNVPDTNPYRSSAADVTTRFDEVFWFGDFNFRLSGGRTVVDALLCQGLVVDVPALLQHDQLIREMRKGSIFKGFQEPDIHFLPSYKFDIGKDTYDSTSKQRTPSYTDRVLYRSRHKGDICPVSYSSCPGIKTSDHRPVYGLFRVKVRPGRDNIPLAAGKFDRELYLLGIKRRISKEIQRQQALQSQNSSTICSVS</sequence>
<evidence type="ECO:0000250" key="1">
    <source>
        <dbReference type="UniProtKB" id="Q9JII1"/>
    </source>
</evidence>
<evidence type="ECO:0000250" key="2">
    <source>
        <dbReference type="UniProtKB" id="Q9WVR1"/>
    </source>
</evidence>
<evidence type="ECO:0000256" key="3">
    <source>
        <dbReference type="SAM" id="MobiDB-lite"/>
    </source>
</evidence>
<evidence type="ECO:0000269" key="4">
    <source>
    </source>
</evidence>
<evidence type="ECO:0000269" key="5">
    <source>
    </source>
</evidence>
<evidence type="ECO:0000269" key="6">
    <source>
    </source>
</evidence>
<evidence type="ECO:0000269" key="7">
    <source>
    </source>
</evidence>
<evidence type="ECO:0000269" key="8">
    <source>
    </source>
</evidence>
<evidence type="ECO:0000269" key="9">
    <source>
    </source>
</evidence>
<evidence type="ECO:0000269" key="10">
    <source>
    </source>
</evidence>
<evidence type="ECO:0000303" key="11">
    <source>
    </source>
</evidence>
<evidence type="ECO:0000303" key="12">
    <source>
    </source>
</evidence>
<evidence type="ECO:0000305" key="13"/>
<evidence type="ECO:0000305" key="14">
    <source>
    </source>
</evidence>
<evidence type="ECO:0000305" key="15">
    <source>
    </source>
</evidence>
<evidence type="ECO:0000305" key="16">
    <source>
    </source>
</evidence>
<evidence type="ECO:0007744" key="17">
    <source>
    </source>
</evidence>
<evidence type="ECO:0007744" key="18">
    <source>
    </source>
</evidence>
<evidence type="ECO:0007829" key="19">
    <source>
        <dbReference type="PDB" id="2XSW"/>
    </source>
</evidence>
<feature type="chain" id="PRO_0000209747" description="Phosphatidylinositol polyphosphate 5-phosphatase type IV" evidence="16">
    <location>
        <begin position="1"/>
        <end position="641"/>
    </location>
</feature>
<feature type="propeptide" id="PRO_0000431688" description="Removed in mature form" evidence="16">
    <location>
        <begin position="642"/>
        <end position="644"/>
    </location>
</feature>
<feature type="repeat" description="1">
    <location>
        <begin position="10"/>
        <end position="13"/>
    </location>
</feature>
<feature type="repeat" description="2">
    <location>
        <begin position="15"/>
        <end position="18"/>
    </location>
</feature>
<feature type="repeat" description="3">
    <location>
        <begin position="28"/>
        <end position="31"/>
    </location>
</feature>
<feature type="repeat" description="4">
    <location>
        <begin position="39"/>
        <end position="42"/>
    </location>
</feature>
<feature type="repeat" description="5">
    <location>
        <begin position="55"/>
        <end position="58"/>
    </location>
</feature>
<feature type="repeat" description="6">
    <location>
        <begin position="69"/>
        <end position="71"/>
    </location>
</feature>
<feature type="repeat" description="7">
    <location>
        <begin position="72"/>
        <end position="74"/>
    </location>
</feature>
<feature type="repeat" description="8">
    <location>
        <begin position="75"/>
        <end position="78"/>
    </location>
</feature>
<feature type="repeat" description="9">
    <location>
        <begin position="121"/>
        <end position="124"/>
    </location>
</feature>
<feature type="repeat" description="10">
    <location>
        <begin position="169"/>
        <end position="172"/>
    </location>
</feature>
<feature type="repeat" description="11">
    <location>
        <begin position="183"/>
        <end position="185"/>
    </location>
</feature>
<feature type="repeat" description="12">
    <location>
        <begin position="190"/>
        <end position="193"/>
    </location>
</feature>
<feature type="repeat" description="13">
    <location>
        <begin position="236"/>
        <end position="239"/>
    </location>
</feature>
<feature type="region of interest" description="Disordered" evidence="3">
    <location>
        <begin position="1"/>
        <end position="193"/>
    </location>
</feature>
<feature type="region of interest" description="13 X 4 AA repeats of P-X-X-P">
    <location>
        <begin position="10"/>
        <end position="242"/>
    </location>
</feature>
<feature type="compositionally biased region" description="Basic and acidic residues" evidence="3">
    <location>
        <begin position="78"/>
        <end position="90"/>
    </location>
</feature>
<feature type="compositionally biased region" description="Polar residues" evidence="3">
    <location>
        <begin position="107"/>
        <end position="118"/>
    </location>
</feature>
<feature type="compositionally biased region" description="Low complexity" evidence="3">
    <location>
        <begin position="152"/>
        <end position="163"/>
    </location>
</feature>
<feature type="modified residue" description="Phosphoserine" evidence="17 18">
    <location>
        <position position="99"/>
    </location>
</feature>
<feature type="modified residue" description="Phosphoserine" evidence="2">
    <location>
        <position position="241"/>
    </location>
</feature>
<feature type="modified residue" description="Phosphoserine" evidence="1">
    <location>
        <position position="256"/>
    </location>
</feature>
<feature type="modified residue" description="Cysteine methyl ester" evidence="16">
    <location>
        <position position="641"/>
    </location>
</feature>
<feature type="lipid moiety-binding region" description="S-farnesyl cysteine" evidence="16">
    <location>
        <position position="641"/>
    </location>
</feature>
<feature type="splice variant" id="VSP_009799" description="In isoform 2." evidence="11">
    <location>
        <begin position="346"/>
        <end position="379"/>
    </location>
</feature>
<feature type="sequence variant" id="VAR_047078" description="In dbSNP:rs36064831.">
    <original>I</original>
    <variation>M</variation>
    <location>
        <position position="201"/>
    </location>
</feature>
<feature type="sequence variant" id="VAR_077247" description="In JBTS1; dbSNP:rs757936530." evidence="8">
    <original>G</original>
    <variation>R</variation>
    <location>
        <position position="286"/>
    </location>
</feature>
<feature type="sequence variant" id="VAR_077248" description="In JBTS1; dbSNP:rs746212325." evidence="8">
    <original>V</original>
    <variation>M</variation>
    <location>
        <position position="303"/>
    </location>
</feature>
<feature type="sequence variant" id="VAR_077249" description="In JBTS1; dbSNP:rs1298311798." evidence="8">
    <original>R</original>
    <variation>S</variation>
    <location>
        <position position="345"/>
    </location>
</feature>
<feature type="sequence variant" id="VAR_063012" description="In JBTS1; slightly reduced phosphatidylinositol-4,5-bisphosphate 5-phosphatase activity; dbSNP:rs121918130." evidence="6">
    <original>R</original>
    <variation>C</variation>
    <location>
        <position position="378"/>
    </location>
</feature>
<feature type="sequence variant" id="VAR_077250" description="In JBTS1." evidence="8">
    <original>T</original>
    <variation>N</variation>
    <location>
        <position position="426"/>
    </location>
</feature>
<feature type="sequence variant" id="VAR_063013" description="In JBTS1; severe reduction of phosphatidylinositol-4,5-bisphosphate 5-phosphatase activity; dbSNP:rs121918129." evidence="6 8">
    <original>R</original>
    <variation>Q</variation>
    <location>
        <position position="435"/>
    </location>
</feature>
<feature type="sequence variant" id="VAR_077251" description="In JBTS1; uncertain significance." evidence="8">
    <original>W</original>
    <variation>R</variation>
    <location>
        <position position="474"/>
    </location>
</feature>
<feature type="sequence variant" id="VAR_063014" description="In JBTS1; associated in cis with W-515; severe reduction of phosphatidylinositol-4,5-bisphosphate 5-phosphatase activity; dbSNP:rs374152018." evidence="6">
    <original>R</original>
    <variation>W</variation>
    <location>
        <position position="512"/>
    </location>
</feature>
<feature type="sequence variant" id="VAR_063015" description="In JBTS1; associated in cis with W-512; severe reduction of phosphatidylinositol-4,5-bisphosphate 5-phosphatase activity; dbSNP:rs13297509." evidence="6">
    <original>R</original>
    <variation>W</variation>
    <location>
        <position position="515"/>
    </location>
</feature>
<feature type="sequence variant" id="VAR_081790" description="In JBTS1; reduced levels of protein in patients' fibroblasts; significant number of cells from patients have shorter or no cilia; dbSNP:rs771866500." evidence="10">
    <original>G</original>
    <variation>A</variation>
    <location>
        <position position="522"/>
    </location>
</feature>
<feature type="sequence variant" id="VAR_077252" description="In JBTS1." evidence="8">
    <original>Y</original>
    <variation>D</variation>
    <location>
        <position position="534"/>
    </location>
</feature>
<feature type="sequence variant" id="VAR_063016" description="In JBTS1; slightly reduced phosphatidylinositol-4,5-bisphosphate 5-phosphatase activity; dbSNP:rs121918128." evidence="6 8">
    <original>R</original>
    <variation>H</variation>
    <location>
        <position position="563"/>
    </location>
</feature>
<feature type="sequence variant" id="VAR_063017" description="In JBTS1; severe reduction of phosphatidylinositol-4,5-bisphosphate 5-phosphatase activity." evidence="6">
    <original>K</original>
    <variation>E</variation>
    <location>
        <position position="580"/>
    </location>
</feature>
<feature type="sequence variant" id="VAR_077253" description="In JBTS1; dbSNP:rs763992407." evidence="8">
    <original>R</original>
    <variation>C</variation>
    <location>
        <position position="585"/>
    </location>
</feature>
<feature type="sequence variant" id="VAR_076892" description="In JBTS1; dbSNP:rs1588830568." evidence="7 8">
    <original>R</original>
    <variation>Q</variation>
    <location>
        <position position="621"/>
    </location>
</feature>
<feature type="sequence variant" id="VAR_077254" description="In JBTS1." evidence="8">
    <original>C</original>
    <variation>R</variation>
    <location>
        <position position="641"/>
    </location>
</feature>
<feature type="mutagenesis site" description="Abolishes farnesylation-dependent interaction with PDE6D." evidence="9">
    <original>C</original>
    <variation>A</variation>
    <location>
        <position position="641"/>
    </location>
</feature>
<feature type="sequence conflict" description="In Ref. 1; AAF81404." evidence="13" ref="1">
    <original>R</original>
    <variation>T</variation>
    <location>
        <position position="345"/>
    </location>
</feature>
<feature type="helix" evidence="19">
    <location>
        <begin position="287"/>
        <end position="293"/>
    </location>
</feature>
<feature type="strand" evidence="19">
    <location>
        <begin position="298"/>
        <end position="307"/>
    </location>
</feature>
<feature type="helix" evidence="19">
    <location>
        <begin position="319"/>
        <end position="322"/>
    </location>
</feature>
<feature type="strand" evidence="19">
    <location>
        <begin position="332"/>
        <end position="340"/>
    </location>
</feature>
<feature type="helix" evidence="19">
    <location>
        <begin position="345"/>
        <end position="356"/>
    </location>
</feature>
<feature type="strand" evidence="19">
    <location>
        <begin position="360"/>
        <end position="368"/>
    </location>
</feature>
<feature type="strand" evidence="19">
    <location>
        <begin position="371"/>
        <end position="378"/>
    </location>
</feature>
<feature type="helix" evidence="19">
    <location>
        <begin position="379"/>
        <end position="384"/>
    </location>
</feature>
<feature type="strand" evidence="19">
    <location>
        <begin position="389"/>
        <end position="399"/>
    </location>
</feature>
<feature type="strand" evidence="19">
    <location>
        <begin position="402"/>
        <end position="413"/>
    </location>
</feature>
<feature type="strand" evidence="19">
    <location>
        <begin position="416"/>
        <end position="424"/>
    </location>
</feature>
<feature type="helix" evidence="19">
    <location>
        <begin position="432"/>
        <end position="445"/>
    </location>
</feature>
<feature type="strand" evidence="19">
    <location>
        <begin position="450"/>
        <end position="452"/>
    </location>
</feature>
<feature type="helix" evidence="19">
    <location>
        <begin position="457"/>
        <end position="459"/>
    </location>
</feature>
<feature type="helix" evidence="19">
    <location>
        <begin position="465"/>
        <end position="467"/>
    </location>
</feature>
<feature type="strand" evidence="19">
    <location>
        <begin position="468"/>
        <end position="477"/>
    </location>
</feature>
<feature type="strand" evidence="19">
    <location>
        <begin position="482"/>
        <end position="484"/>
    </location>
</feature>
<feature type="helix" evidence="19">
    <location>
        <begin position="486"/>
        <end position="493"/>
    </location>
</feature>
<feature type="helix" evidence="19">
    <location>
        <begin position="501"/>
        <end position="505"/>
    </location>
</feature>
<feature type="helix" evidence="19">
    <location>
        <begin position="509"/>
        <end position="515"/>
    </location>
</feature>
<feature type="strand" evidence="19">
    <location>
        <begin position="518"/>
        <end position="520"/>
    </location>
</feature>
<feature type="strand" evidence="19">
    <location>
        <begin position="540"/>
        <end position="543"/>
    </location>
</feature>
<feature type="strand" evidence="19">
    <location>
        <begin position="556"/>
        <end position="564"/>
    </location>
</feature>
<feature type="strand" evidence="19">
    <location>
        <begin position="567"/>
        <end position="575"/>
    </location>
</feature>
<feature type="strand" evidence="19">
    <location>
        <begin position="581"/>
        <end position="584"/>
    </location>
</feature>
<feature type="strand" evidence="19">
    <location>
        <begin position="587"/>
        <end position="594"/>
    </location>
</feature>
<feature type="helix" evidence="19">
    <location>
        <begin position="611"/>
        <end position="623"/>
    </location>
</feature>
<name>INP5E_HUMAN</name>
<proteinExistence type="evidence at protein level"/>
<reference key="1">
    <citation type="journal article" date="2000" name="J. Biol. Chem.">
        <title>The isolation and characterization of a cDNA encoding phospholipid-specific inositol polyphosphate 5-phosphatase.</title>
        <authorList>
            <person name="Kisseleva M.V."/>
            <person name="Wilson M.P."/>
            <person name="Majerus P.W."/>
        </authorList>
    </citation>
    <scope>NUCLEOTIDE SEQUENCE [MRNA] (ISOFORMS 1 AND 2)</scope>
    <scope>FUNCTION</scope>
    <scope>CATALYTIC ACTIVITY</scope>
    <scope>ACTIVITY REGULATION</scope>
    <scope>TISSUE SPECIFICITY</scope>
    <scope>BIOPHYSICOCHEMICAL PROPERTIES</scope>
    <source>
        <tissue>Fetal brain</tissue>
    </source>
</reference>
<reference key="2">
    <citation type="journal article" date="2004" name="Nature">
        <title>DNA sequence and analysis of human chromosome 9.</title>
        <authorList>
            <person name="Humphray S.J."/>
            <person name="Oliver K."/>
            <person name="Hunt A.R."/>
            <person name="Plumb R.W."/>
            <person name="Loveland J.E."/>
            <person name="Howe K.L."/>
            <person name="Andrews T.D."/>
            <person name="Searle S."/>
            <person name="Hunt S.E."/>
            <person name="Scott C.E."/>
            <person name="Jones M.C."/>
            <person name="Ainscough R."/>
            <person name="Almeida J.P."/>
            <person name="Ambrose K.D."/>
            <person name="Ashwell R.I.S."/>
            <person name="Babbage A.K."/>
            <person name="Babbage S."/>
            <person name="Bagguley C.L."/>
            <person name="Bailey J."/>
            <person name="Banerjee R."/>
            <person name="Barker D.J."/>
            <person name="Barlow K.F."/>
            <person name="Bates K."/>
            <person name="Beasley H."/>
            <person name="Beasley O."/>
            <person name="Bird C.P."/>
            <person name="Bray-Allen S."/>
            <person name="Brown A.J."/>
            <person name="Brown J.Y."/>
            <person name="Burford D."/>
            <person name="Burrill W."/>
            <person name="Burton J."/>
            <person name="Carder C."/>
            <person name="Carter N.P."/>
            <person name="Chapman J.C."/>
            <person name="Chen Y."/>
            <person name="Clarke G."/>
            <person name="Clark S.Y."/>
            <person name="Clee C.M."/>
            <person name="Clegg S."/>
            <person name="Collier R.E."/>
            <person name="Corby N."/>
            <person name="Crosier M."/>
            <person name="Cummings A.T."/>
            <person name="Davies J."/>
            <person name="Dhami P."/>
            <person name="Dunn M."/>
            <person name="Dutta I."/>
            <person name="Dyer L.W."/>
            <person name="Earthrowl M.E."/>
            <person name="Faulkner L."/>
            <person name="Fleming C.J."/>
            <person name="Frankish A."/>
            <person name="Frankland J.A."/>
            <person name="French L."/>
            <person name="Fricker D.G."/>
            <person name="Garner P."/>
            <person name="Garnett J."/>
            <person name="Ghori J."/>
            <person name="Gilbert J.G.R."/>
            <person name="Glison C."/>
            <person name="Grafham D.V."/>
            <person name="Gribble S."/>
            <person name="Griffiths C."/>
            <person name="Griffiths-Jones S."/>
            <person name="Grocock R."/>
            <person name="Guy J."/>
            <person name="Hall R.E."/>
            <person name="Hammond S."/>
            <person name="Harley J.L."/>
            <person name="Harrison E.S.I."/>
            <person name="Hart E.A."/>
            <person name="Heath P.D."/>
            <person name="Henderson C.D."/>
            <person name="Hopkins B.L."/>
            <person name="Howard P.J."/>
            <person name="Howden P.J."/>
            <person name="Huckle E."/>
            <person name="Johnson C."/>
            <person name="Johnson D."/>
            <person name="Joy A.A."/>
            <person name="Kay M."/>
            <person name="Keenan S."/>
            <person name="Kershaw J.K."/>
            <person name="Kimberley A.M."/>
            <person name="King A."/>
            <person name="Knights A."/>
            <person name="Laird G.K."/>
            <person name="Langford C."/>
            <person name="Lawlor S."/>
            <person name="Leongamornlert D.A."/>
            <person name="Leversha M."/>
            <person name="Lloyd C."/>
            <person name="Lloyd D.M."/>
            <person name="Lovell J."/>
            <person name="Martin S."/>
            <person name="Mashreghi-Mohammadi M."/>
            <person name="Matthews L."/>
            <person name="McLaren S."/>
            <person name="McLay K.E."/>
            <person name="McMurray A."/>
            <person name="Milne S."/>
            <person name="Nickerson T."/>
            <person name="Nisbett J."/>
            <person name="Nordsiek G."/>
            <person name="Pearce A.V."/>
            <person name="Peck A.I."/>
            <person name="Porter K.M."/>
            <person name="Pandian R."/>
            <person name="Pelan S."/>
            <person name="Phillimore B."/>
            <person name="Povey S."/>
            <person name="Ramsey Y."/>
            <person name="Rand V."/>
            <person name="Scharfe M."/>
            <person name="Sehra H.K."/>
            <person name="Shownkeen R."/>
            <person name="Sims S.K."/>
            <person name="Skuce C.D."/>
            <person name="Smith M."/>
            <person name="Steward C.A."/>
            <person name="Swarbreck D."/>
            <person name="Sycamore N."/>
            <person name="Tester J."/>
            <person name="Thorpe A."/>
            <person name="Tracey A."/>
            <person name="Tromans A."/>
            <person name="Thomas D.W."/>
            <person name="Wall M."/>
            <person name="Wallis J.M."/>
            <person name="West A.P."/>
            <person name="Whitehead S.L."/>
            <person name="Willey D.L."/>
            <person name="Williams S.A."/>
            <person name="Wilming L."/>
            <person name="Wray P.W."/>
            <person name="Young L."/>
            <person name="Ashurst J.L."/>
            <person name="Coulson A."/>
            <person name="Blocker H."/>
            <person name="Durbin R.M."/>
            <person name="Sulston J.E."/>
            <person name="Hubbard T."/>
            <person name="Jackson M.J."/>
            <person name="Bentley D.R."/>
            <person name="Beck S."/>
            <person name="Rogers J."/>
            <person name="Dunham I."/>
        </authorList>
    </citation>
    <scope>NUCLEOTIDE SEQUENCE [LARGE SCALE GENOMIC DNA]</scope>
</reference>
<reference key="3">
    <citation type="submission" date="2005-07" db="EMBL/GenBank/DDBJ databases">
        <authorList>
            <person name="Mural R.J."/>
            <person name="Istrail S."/>
            <person name="Sutton G.G."/>
            <person name="Florea L."/>
            <person name="Halpern A.L."/>
            <person name="Mobarry C.M."/>
            <person name="Lippert R."/>
            <person name="Walenz B."/>
            <person name="Shatkay H."/>
            <person name="Dew I."/>
            <person name="Miller J.R."/>
            <person name="Flanigan M.J."/>
            <person name="Edwards N.J."/>
            <person name="Bolanos R."/>
            <person name="Fasulo D."/>
            <person name="Halldorsson B.V."/>
            <person name="Hannenhalli S."/>
            <person name="Turner R."/>
            <person name="Yooseph S."/>
            <person name="Lu F."/>
            <person name="Nusskern D.R."/>
            <person name="Shue B.C."/>
            <person name="Zheng X.H."/>
            <person name="Zhong F."/>
            <person name="Delcher A.L."/>
            <person name="Huson D.H."/>
            <person name="Kravitz S.A."/>
            <person name="Mouchard L."/>
            <person name="Reinert K."/>
            <person name="Remington K.A."/>
            <person name="Clark A.G."/>
            <person name="Waterman M.S."/>
            <person name="Eichler E.E."/>
            <person name="Adams M.D."/>
            <person name="Hunkapiller M.W."/>
            <person name="Myers E.W."/>
            <person name="Venter J.C."/>
        </authorList>
    </citation>
    <scope>NUCLEOTIDE SEQUENCE [LARGE SCALE GENOMIC DNA]</scope>
</reference>
<reference key="4">
    <citation type="journal article" date="2004" name="Genome Res.">
        <title>The status, quality, and expansion of the NIH full-length cDNA project: the Mammalian Gene Collection (MGC).</title>
        <authorList>
            <consortium name="The MGC Project Team"/>
        </authorList>
    </citation>
    <scope>NUCLEOTIDE SEQUENCE [LARGE SCALE MRNA] (ISOFORM 1)</scope>
    <source>
        <tissue>Brain</tissue>
    </source>
</reference>
<reference key="5">
    <citation type="submission" date="1996-01" db="EMBL/GenBank/DDBJ databases">
        <authorList>
            <person name="Nussbaum R.L."/>
        </authorList>
    </citation>
    <scope>NUCLEOTIDE SEQUENCE [MRNA] OF 469-644 (ISOFORM 1)</scope>
</reference>
<reference key="6">
    <citation type="journal article" date="2007" name="Science">
        <title>ATM and ATR substrate analysis reveals extensive protein networks responsive to DNA damage.</title>
        <authorList>
            <person name="Matsuoka S."/>
            <person name="Ballif B.A."/>
            <person name="Smogorzewska A."/>
            <person name="McDonald E.R. III"/>
            <person name="Hurov K.E."/>
            <person name="Luo J."/>
            <person name="Bakalarski C.E."/>
            <person name="Zhao Z."/>
            <person name="Solimini N."/>
            <person name="Lerenthal Y."/>
            <person name="Shiloh Y."/>
            <person name="Gygi S.P."/>
            <person name="Elledge S.J."/>
        </authorList>
    </citation>
    <scope>PHOSPHORYLATION [LARGE SCALE ANALYSIS] AT SER-99</scope>
    <scope>IDENTIFICATION BY MASS SPECTROMETRY [LARGE SCALE ANALYSIS]</scope>
    <source>
        <tissue>Embryonic kidney</tissue>
    </source>
</reference>
<reference key="7">
    <citation type="journal article" date="2009" name="Nat. Genet.">
        <title>INPP5E mutations cause primary cilium signaling defects, ciliary instability and ciliopathies in human and mouse.</title>
        <authorList>
            <person name="Jacoby M."/>
            <person name="Cox J.J."/>
            <person name="Gayral S."/>
            <person name="Hampshire D.J."/>
            <person name="Ayub M."/>
            <person name="Blockmans M."/>
            <person name="Pernot E."/>
            <person name="Kisseleva M.V."/>
            <person name="Compere P."/>
            <person name="Schiffmann S.N."/>
            <person name="Gergely F."/>
            <person name="Riley J.H."/>
            <person name="Perez-Morga D."/>
            <person name="Woods C.G."/>
            <person name="Schurmans S."/>
        </authorList>
    </citation>
    <scope>SUBCELLULAR LOCATION</scope>
    <scope>INVOLVEMENT IN MORMS</scope>
</reference>
<reference key="8">
    <citation type="journal article" date="2009" name="Nat. Genet.">
        <title>Mutations in INPP5E, encoding inositol polyphosphate-5-phosphatase E, link phosphatidyl inositol signaling to the ciliopathies.</title>
        <authorList>
            <person name="Bielas S.L."/>
            <person name="Silhavy J.L."/>
            <person name="Brancati F."/>
            <person name="Kisseleva M.V."/>
            <person name="Al-Gazali L."/>
            <person name="Sztriha L."/>
            <person name="Bayoumi R.A."/>
            <person name="Zaki M.S."/>
            <person name="Abdel-Aleem A."/>
            <person name="Rosti R.O."/>
            <person name="Kayserili H."/>
            <person name="Swistun D."/>
            <person name="Scott L.C."/>
            <person name="Bertini E."/>
            <person name="Boltshauser E."/>
            <person name="Fazzi E."/>
            <person name="Travaglini L."/>
            <person name="Field S.J."/>
            <person name="Gayral S."/>
            <person name="Jacoby M."/>
            <person name="Schurmans S."/>
            <person name="Dallapiccola B."/>
            <person name="Majerus P.W."/>
            <person name="Valente E.M."/>
            <person name="Gleeson J.G."/>
        </authorList>
    </citation>
    <scope>SUBCELLULAR LOCATION</scope>
    <scope>VARIANTS JBTS1 CYS-378; GLN-435; TRP-512; TRP-515; HIS-563 AND GLU-580</scope>
    <scope>CHARACTERIZATION OF VARIANTS JBTS1 CYS-378; GLN-435; TRP-512; TRP-515; HIS-563 AND GLU-580</scope>
    <scope>CATALYTIC ACTIVITY</scope>
</reference>
<reference key="9">
    <citation type="journal article" date="2013" name="J. Proteome Res.">
        <title>Toward a comprehensive characterization of a human cancer cell phosphoproteome.</title>
        <authorList>
            <person name="Zhou H."/>
            <person name="Di Palma S."/>
            <person name="Preisinger C."/>
            <person name="Peng M."/>
            <person name="Polat A.N."/>
            <person name="Heck A.J."/>
            <person name="Mohammed S."/>
        </authorList>
    </citation>
    <scope>PHOSPHORYLATION [LARGE SCALE ANALYSIS] AT SER-99</scope>
    <scope>IDENTIFICATION BY MASS SPECTROMETRY [LARGE SCALE ANALYSIS]</scope>
    <source>
        <tissue>Cervix carcinoma</tissue>
        <tissue>Erythroleukemia</tissue>
    </source>
</reference>
<reference key="10">
    <citation type="journal article" date="2014" name="Hum. Mutat.">
        <title>A homozygous PDE6D mutation in Joubert syndrome impairs targeting of farnesylated INPP5E protein to the primary cilium.</title>
        <authorList>
            <person name="Thomas S."/>
            <person name="Wright K.J."/>
            <person name="Le Corre S."/>
            <person name="Micalizzi A."/>
            <person name="Romani M."/>
            <person name="Abhyankar A."/>
            <person name="Saada J."/>
            <person name="Perrault I."/>
            <person name="Amiel J."/>
            <person name="Litzler J."/>
            <person name="Filhol E."/>
            <person name="Elkhartoufi N."/>
            <person name="Kwong M."/>
            <person name="Casanova J.L."/>
            <person name="Boddaert N."/>
            <person name="Baehr W."/>
            <person name="Lyonnet S."/>
            <person name="Munnich A."/>
            <person name="Burglen L."/>
            <person name="Chassaing N."/>
            <person name="Encha-Ravazi F."/>
            <person name="Vekemans M."/>
            <person name="Gleeson J.G."/>
            <person name="Valente E.M."/>
            <person name="Jackson P.K."/>
            <person name="Drummond I.A."/>
            <person name="Saunier S."/>
            <person name="Attie-Bitach T."/>
        </authorList>
    </citation>
    <scope>INTERACTION WITH PDE6D</scope>
    <scope>SUBCELLULAR LOCATION</scope>
    <scope>ISOPRENYLATION AT CYS-641</scope>
    <scope>METHYLATION AT CYS-641</scope>
    <scope>MUTAGENESIS OF CYS-641</scope>
</reference>
<reference key="11">
    <citation type="submission" date="2010-11" db="PDB data bank">
        <title>Crystal structure of human INPP5E.</title>
        <authorList>
            <consortium name="Structural genomics consortium (SGC)"/>
        </authorList>
    </citation>
    <scope>X-RAY CRYSTALLOGRAPHY (1.9 ANGSTROMS) OF 275-623</scope>
</reference>
<reference key="12">
    <citation type="journal article" date="2013" name="Eur. J. Hum. Genet.">
        <title>Phenotypic spectrum and prevalence of INPP5E mutations in Joubert syndrome and related disorders.</title>
        <authorList>
            <consortium name="International JSRD Study Group"/>
            <person name="Travaglini L."/>
            <person name="Brancati F."/>
            <person name="Silhavy J."/>
            <person name="Iannicelli M."/>
            <person name="Nickerson E."/>
            <person name="Elkhartoufi N."/>
            <person name="Scott E."/>
            <person name="Spencer E."/>
            <person name="Gabriel S."/>
            <person name="Thomas S."/>
            <person name="Ben-Zeev B."/>
            <person name="Bertini E."/>
            <person name="Boltshauser E."/>
            <person name="Chaouch M."/>
            <person name="Cilio M.R."/>
            <person name="de Jong M.M."/>
            <person name="Kayserili H."/>
            <person name="Ogur G."/>
            <person name="Poretti A."/>
            <person name="Signorini S."/>
            <person name="Uziel G."/>
            <person name="Zaki M.S."/>
            <person name="Johnson C."/>
            <person name="Attie-Bitach T."/>
            <person name="Gleeson J.G."/>
            <person name="Valente E.M."/>
        </authorList>
    </citation>
    <scope>VARIANTS JBTS1 ARG-286; MET-303; SER-345; ASN-426; GLN-435; ARG-474; ASP-534; HIS-563; CYS-585; GLN-621 AND ARG-641</scope>
</reference>
<reference key="13">
    <citation type="journal article" date="2013" name="J. Hum. Genet.">
        <title>The diagnostic utility of exome sequencing in Joubert syndrome and related disorders.</title>
        <authorList>
            <person name="Tsurusaki Y."/>
            <person name="Kobayashi Y."/>
            <person name="Hisano M."/>
            <person name="Ito S."/>
            <person name="Doi H."/>
            <person name="Nakashima M."/>
            <person name="Saitsu H."/>
            <person name="Matsumoto N."/>
            <person name="Miyake N."/>
        </authorList>
    </citation>
    <scope>VARIANT JBTS1 GLN-621</scope>
    <scope>INVOLVEMENT IN JBTS1</scope>
</reference>
<reference key="14">
    <citation type="journal article" date="2017" name="Am. J. Med. Genet. A">
        <title>Defective ciliogenesis in INPP5E-related Joubert syndrome.</title>
        <authorList>
            <person name="Hardee I."/>
            <person name="Soldatos A."/>
            <person name="Davids M."/>
            <person name="Vilboux T."/>
            <person name="Toro C."/>
            <person name="David K.L."/>
            <person name="Ferreira C.R."/>
            <person name="Nehrebecky M."/>
            <person name="Snow J."/>
            <person name="Thurm A."/>
            <person name="Heller T."/>
            <person name="Macnamara E.F."/>
            <person name="Gunay-Aygun M."/>
            <person name="Zein W.M."/>
            <person name="Gahl W.A."/>
            <person name="Malicdan M.C.V."/>
        </authorList>
    </citation>
    <scope>VARIANT JBTS1 ALA-522</scope>
</reference>
<dbReference type="EC" id="3.1.3.36" evidence="4 6"/>
<dbReference type="EC" id="3.1.3.86" evidence="4"/>
<dbReference type="EMBL" id="AF187891">
    <property type="protein sequence ID" value="AAF81404.1"/>
    <property type="molecule type" value="mRNA"/>
</dbReference>
<dbReference type="EMBL" id="AL592301">
    <property type="status" value="NOT_ANNOTATED_CDS"/>
    <property type="molecule type" value="Genomic_DNA"/>
</dbReference>
<dbReference type="EMBL" id="CH471090">
    <property type="protein sequence ID" value="EAW88234.1"/>
    <property type="molecule type" value="Genomic_DNA"/>
</dbReference>
<dbReference type="EMBL" id="BC028032">
    <property type="protein sequence ID" value="AAH28032.1"/>
    <property type="molecule type" value="mRNA"/>
</dbReference>
<dbReference type="EMBL" id="U45974">
    <property type="protein sequence ID" value="AAB03215.1"/>
    <property type="status" value="ALT_SEQ"/>
    <property type="molecule type" value="mRNA"/>
</dbReference>
<dbReference type="CCDS" id="CCDS7000.1">
    <molecule id="Q9NRR6-1"/>
</dbReference>
<dbReference type="RefSeq" id="NP_001305431.1">
    <property type="nucleotide sequence ID" value="NM_001318502.1"/>
</dbReference>
<dbReference type="RefSeq" id="NP_063945.2">
    <molecule id="Q9NRR6-1"/>
    <property type="nucleotide sequence ID" value="NM_019892.5"/>
</dbReference>
<dbReference type="PDB" id="2XSW">
    <property type="method" value="X-ray"/>
    <property type="resolution" value="1.90 A"/>
    <property type="chains" value="A/B=275-623"/>
</dbReference>
<dbReference type="PDBsum" id="2XSW"/>
<dbReference type="SMR" id="Q9NRR6"/>
<dbReference type="BioGRID" id="121159">
    <property type="interactions" value="73"/>
</dbReference>
<dbReference type="CORUM" id="Q9NRR6"/>
<dbReference type="FunCoup" id="Q9NRR6">
    <property type="interactions" value="1713"/>
</dbReference>
<dbReference type="IntAct" id="Q9NRR6">
    <property type="interactions" value="8"/>
</dbReference>
<dbReference type="STRING" id="9606.ENSP00000360777"/>
<dbReference type="SwissLipids" id="SLP:000001180"/>
<dbReference type="DEPOD" id="INPP5E"/>
<dbReference type="GlyGen" id="Q9NRR6">
    <property type="glycosylation" value="2 sites, 1 O-linked glycan (1 site)"/>
</dbReference>
<dbReference type="iPTMnet" id="Q9NRR6"/>
<dbReference type="PhosphoSitePlus" id="Q9NRR6"/>
<dbReference type="BioMuta" id="INPP5E"/>
<dbReference type="DMDM" id="212276439"/>
<dbReference type="jPOST" id="Q9NRR6"/>
<dbReference type="MassIVE" id="Q9NRR6"/>
<dbReference type="PaxDb" id="9606-ENSP00000360777"/>
<dbReference type="PeptideAtlas" id="Q9NRR6"/>
<dbReference type="ProteomicsDB" id="82414">
    <molecule id="Q9NRR6-1"/>
</dbReference>
<dbReference type="ProteomicsDB" id="82415">
    <molecule id="Q9NRR6-2"/>
</dbReference>
<dbReference type="Pumba" id="Q9NRR6"/>
<dbReference type="Antibodypedia" id="32176">
    <property type="antibodies" value="96 antibodies from 24 providers"/>
</dbReference>
<dbReference type="DNASU" id="56623"/>
<dbReference type="Ensembl" id="ENST00000371712.4">
    <molecule id="Q9NRR6-1"/>
    <property type="protein sequence ID" value="ENSP00000360777.3"/>
    <property type="gene ID" value="ENSG00000148384.14"/>
</dbReference>
<dbReference type="Ensembl" id="ENST00000676019.1">
    <molecule id="Q9NRR6-2"/>
    <property type="protein sequence ID" value="ENSP00000501984.1"/>
    <property type="gene ID" value="ENSG00000148384.14"/>
</dbReference>
<dbReference type="GeneID" id="56623"/>
<dbReference type="KEGG" id="hsa:56623"/>
<dbReference type="MANE-Select" id="ENST00000371712.4">
    <property type="protein sequence ID" value="ENSP00000360777.3"/>
    <property type="RefSeq nucleotide sequence ID" value="NM_019892.6"/>
    <property type="RefSeq protein sequence ID" value="NP_063945.2"/>
</dbReference>
<dbReference type="UCSC" id="uc004cho.4">
    <molecule id="Q9NRR6-1"/>
    <property type="organism name" value="human"/>
</dbReference>
<dbReference type="AGR" id="HGNC:21474"/>
<dbReference type="CTD" id="56623"/>
<dbReference type="DisGeNET" id="56623"/>
<dbReference type="GeneCards" id="INPP5E"/>
<dbReference type="GeneReviews" id="INPP5E"/>
<dbReference type="HGNC" id="HGNC:21474">
    <property type="gene designation" value="INPP5E"/>
</dbReference>
<dbReference type="HPA" id="ENSG00000148384">
    <property type="expression patterns" value="Low tissue specificity"/>
</dbReference>
<dbReference type="MalaCards" id="INPP5E"/>
<dbReference type="MIM" id="213300">
    <property type="type" value="phenotype"/>
</dbReference>
<dbReference type="MIM" id="610156">
    <property type="type" value="phenotype"/>
</dbReference>
<dbReference type="MIM" id="613037">
    <property type="type" value="gene"/>
</dbReference>
<dbReference type="neXtProt" id="NX_Q9NRR6"/>
<dbReference type="OpenTargets" id="ENSG00000148384"/>
<dbReference type="Orphanet" id="475">
    <property type="disease" value="Joubert syndrome"/>
</dbReference>
<dbReference type="Orphanet" id="1454">
    <property type="disease" value="Joubert syndrome with hepatic defect"/>
</dbReference>
<dbReference type="Orphanet" id="220493">
    <property type="disease" value="Joubert syndrome with ocular defect"/>
</dbReference>
<dbReference type="Orphanet" id="75858">
    <property type="disease" value="MORM syndrome"/>
</dbReference>
<dbReference type="PharmGKB" id="PA164741785"/>
<dbReference type="VEuPathDB" id="HostDB:ENSG00000148384"/>
<dbReference type="eggNOG" id="KOG0565">
    <property type="taxonomic scope" value="Eukaryota"/>
</dbReference>
<dbReference type="GeneTree" id="ENSGT00940000158199"/>
<dbReference type="HOGENOM" id="CLU_011711_5_5_1"/>
<dbReference type="InParanoid" id="Q9NRR6"/>
<dbReference type="OMA" id="HADYKLR"/>
<dbReference type="OrthoDB" id="2248459at2759"/>
<dbReference type="PAN-GO" id="Q9NRR6">
    <property type="GO annotations" value="5 GO annotations based on evolutionary models"/>
</dbReference>
<dbReference type="PhylomeDB" id="Q9NRR6"/>
<dbReference type="TreeFam" id="TF323475"/>
<dbReference type="BioCyc" id="MetaCyc:HS09270-MONOMER"/>
<dbReference type="BRENDA" id="3.1.3.36">
    <property type="organism ID" value="2681"/>
</dbReference>
<dbReference type="PathwayCommons" id="Q9NRR6"/>
<dbReference type="Reactome" id="R-HSA-1660514">
    <property type="pathway name" value="Synthesis of PIPs at the Golgi membrane"/>
</dbReference>
<dbReference type="Reactome" id="R-HSA-5624958">
    <property type="pathway name" value="ARL13B-mediated ciliary trafficking of INPP5E"/>
</dbReference>
<dbReference type="SignaLink" id="Q9NRR6"/>
<dbReference type="BioGRID-ORCS" id="56623">
    <property type="hits" value="28 hits in 1171 CRISPR screens"/>
</dbReference>
<dbReference type="ChiTaRS" id="INPP5E">
    <property type="organism name" value="human"/>
</dbReference>
<dbReference type="EvolutionaryTrace" id="Q9NRR6"/>
<dbReference type="GenomeRNAi" id="56623"/>
<dbReference type="Pharos" id="Q9NRR6">
    <property type="development level" value="Tbio"/>
</dbReference>
<dbReference type="PRO" id="PR:Q9NRR6"/>
<dbReference type="Proteomes" id="UP000005640">
    <property type="component" value="Chromosome 9"/>
</dbReference>
<dbReference type="RNAct" id="Q9NRR6">
    <property type="molecule type" value="protein"/>
</dbReference>
<dbReference type="Bgee" id="ENSG00000148384">
    <property type="expression patterns" value="Expressed in right uterine tube and 194 other cell types or tissues"/>
</dbReference>
<dbReference type="ExpressionAtlas" id="Q9NRR6">
    <property type="expression patterns" value="baseline and differential"/>
</dbReference>
<dbReference type="GO" id="GO:0005930">
    <property type="term" value="C:axoneme"/>
    <property type="evidence" value="ECO:0000314"/>
    <property type="project" value="UniProtKB"/>
</dbReference>
<dbReference type="GO" id="GO:0005929">
    <property type="term" value="C:cilium"/>
    <property type="evidence" value="ECO:0000304"/>
    <property type="project" value="Reactome"/>
</dbReference>
<dbReference type="GO" id="GO:0005829">
    <property type="term" value="C:cytosol"/>
    <property type="evidence" value="ECO:0000304"/>
    <property type="project" value="Reactome"/>
</dbReference>
<dbReference type="GO" id="GO:0005794">
    <property type="term" value="C:Golgi apparatus"/>
    <property type="evidence" value="ECO:0000318"/>
    <property type="project" value="GO_Central"/>
</dbReference>
<dbReference type="GO" id="GO:0032580">
    <property type="term" value="C:Golgi cisterna membrane"/>
    <property type="evidence" value="ECO:0007669"/>
    <property type="project" value="UniProtKB-SubCell"/>
</dbReference>
<dbReference type="GO" id="GO:0000139">
    <property type="term" value="C:Golgi membrane"/>
    <property type="evidence" value="ECO:0007669"/>
    <property type="project" value="Ensembl"/>
</dbReference>
<dbReference type="GO" id="GO:0005634">
    <property type="term" value="C:nucleus"/>
    <property type="evidence" value="ECO:0000250"/>
    <property type="project" value="UniProtKB"/>
</dbReference>
<dbReference type="GO" id="GO:0005886">
    <property type="term" value="C:plasma membrane"/>
    <property type="evidence" value="ECO:0007669"/>
    <property type="project" value="UniProtKB-SubCell"/>
</dbReference>
<dbReference type="GO" id="GO:0001726">
    <property type="term" value="C:ruffle"/>
    <property type="evidence" value="ECO:0007669"/>
    <property type="project" value="UniProtKB-SubCell"/>
</dbReference>
<dbReference type="GO" id="GO:0004445">
    <property type="term" value="F:inositol-polyphosphate 5-phosphatase activity"/>
    <property type="evidence" value="ECO:0000304"/>
    <property type="project" value="UniProtKB"/>
</dbReference>
<dbReference type="GO" id="GO:0016314">
    <property type="term" value="F:phosphatidylinositol-3,4,5-trisphosphate 3-phosphatase activity"/>
    <property type="evidence" value="ECO:0007669"/>
    <property type="project" value="Ensembl"/>
</dbReference>
<dbReference type="GO" id="GO:0034485">
    <property type="term" value="F:phosphatidylinositol-3,4,5-trisphosphate 5-phosphatase activity"/>
    <property type="evidence" value="ECO:0007669"/>
    <property type="project" value="UniProtKB-EC"/>
</dbReference>
<dbReference type="GO" id="GO:0043813">
    <property type="term" value="F:phosphatidylinositol-3,5-bisphosphate 5-phosphatase activity"/>
    <property type="evidence" value="ECO:0007669"/>
    <property type="project" value="RHEA"/>
</dbReference>
<dbReference type="GO" id="GO:0004439">
    <property type="term" value="F:phosphatidylinositol-4,5-bisphosphate 5-phosphatase activity"/>
    <property type="evidence" value="ECO:0000318"/>
    <property type="project" value="GO_Central"/>
</dbReference>
<dbReference type="GO" id="GO:0060271">
    <property type="term" value="P:cilium assembly"/>
    <property type="evidence" value="ECO:0007669"/>
    <property type="project" value="Ensembl"/>
</dbReference>
<dbReference type="GO" id="GO:0051898">
    <property type="term" value="P:negative regulation of phosphatidylinositol 3-kinase/protein kinase B signal transduction"/>
    <property type="evidence" value="ECO:0007669"/>
    <property type="project" value="Ensembl"/>
</dbReference>
<dbReference type="GO" id="GO:1903565">
    <property type="term" value="P:negative regulation of protein localization to cilium"/>
    <property type="evidence" value="ECO:0007669"/>
    <property type="project" value="Ensembl"/>
</dbReference>
<dbReference type="GO" id="GO:0017148">
    <property type="term" value="P:negative regulation of translation"/>
    <property type="evidence" value="ECO:0007669"/>
    <property type="project" value="Ensembl"/>
</dbReference>
<dbReference type="GO" id="GO:0006661">
    <property type="term" value="P:phosphatidylinositol biosynthetic process"/>
    <property type="evidence" value="ECO:0000304"/>
    <property type="project" value="Reactome"/>
</dbReference>
<dbReference type="GO" id="GO:0046856">
    <property type="term" value="P:phosphatidylinositol dephosphorylation"/>
    <property type="evidence" value="ECO:0000318"/>
    <property type="project" value="GO_Central"/>
</dbReference>
<dbReference type="GO" id="GO:1902140">
    <property type="term" value="P:response to inositol"/>
    <property type="evidence" value="ECO:0007669"/>
    <property type="project" value="Ensembl"/>
</dbReference>
<dbReference type="CDD" id="cd09095">
    <property type="entry name" value="INPP5c_INPP5E-like"/>
    <property type="match status" value="1"/>
</dbReference>
<dbReference type="FunFam" id="3.60.10.10:FF:000039">
    <property type="entry name" value="72 kDa inositol polyphosphate 5-phosphatase"/>
    <property type="match status" value="1"/>
</dbReference>
<dbReference type="Gene3D" id="3.60.10.10">
    <property type="entry name" value="Endonuclease/exonuclease/phosphatase"/>
    <property type="match status" value="1"/>
</dbReference>
<dbReference type="InterPro" id="IPR036691">
    <property type="entry name" value="Endo/exonu/phosph_ase_sf"/>
</dbReference>
<dbReference type="InterPro" id="IPR042478">
    <property type="entry name" value="INPP5E"/>
</dbReference>
<dbReference type="InterPro" id="IPR000300">
    <property type="entry name" value="IPPc"/>
</dbReference>
<dbReference type="PANTHER" id="PTHR46625">
    <property type="entry name" value="72 KDA INOSITOL POLYPHOSPHATE 5-PHOSPHATASE"/>
    <property type="match status" value="1"/>
</dbReference>
<dbReference type="PANTHER" id="PTHR46625:SF1">
    <property type="entry name" value="PHOSPHATIDYLINOSITOL POLYPHOSPHATE 5-PHOSPHATASE TYPE IV"/>
    <property type="match status" value="1"/>
</dbReference>
<dbReference type="Pfam" id="PF22669">
    <property type="entry name" value="Exo_endo_phos2"/>
    <property type="match status" value="1"/>
</dbReference>
<dbReference type="SMART" id="SM00128">
    <property type="entry name" value="IPPc"/>
    <property type="match status" value="1"/>
</dbReference>
<dbReference type="SUPFAM" id="SSF56219">
    <property type="entry name" value="DNase I-like"/>
    <property type="match status" value="1"/>
</dbReference>
<comment type="function">
    <text evidence="1 4">Phosphatidylinositol (PtdIns) phosphatase that specifically hydrolyzes the 5-phosphate of phosphatidylinositol-3,4,5-trisphosphate (PtdIns(3,4,5)P3), phosphatidylinositol 4,5-bisphosphate (PtdIns(4,5)P2) and phosphatidylinositol 3,5-bisphosphate (PtdIns(3,5)P2) (By similarity) (PubMed:10764818). Specific for lipid substrates, inactive towards water soluble inositol phosphates (PubMed:10764818). Plays an essential role in the primary cilium by controlling ciliary growth and phosphoinositide 3-kinase (PI3K) signaling and stability (By similarity).</text>
</comment>
<comment type="catalytic activity">
    <reaction evidence="4 6">
        <text>a 1,2-diacyl-sn-glycero-3-phospho-(1D-myo-inositol-4,5-bisphosphate) + H2O = a 1,2-diacyl-sn-glycero-3-phospho-(1D-myo-inositol 4-phosphate) + phosphate</text>
        <dbReference type="Rhea" id="RHEA:22764"/>
        <dbReference type="ChEBI" id="CHEBI:15377"/>
        <dbReference type="ChEBI" id="CHEBI:43474"/>
        <dbReference type="ChEBI" id="CHEBI:58178"/>
        <dbReference type="ChEBI" id="CHEBI:58456"/>
        <dbReference type="EC" id="3.1.3.36"/>
    </reaction>
    <physiologicalReaction direction="left-to-right" evidence="14 15">
        <dbReference type="Rhea" id="RHEA:22765"/>
    </physiologicalReaction>
</comment>
<comment type="catalytic activity">
    <reaction evidence="4">
        <text>a 1,2-diacyl-sn-glycero-3-phospho-(1D-myo-inositol-3,4,5-trisphosphate) + H2O = a 1,2-diacyl-sn-glycero-3-phospho-(1D-myo-inositol-3,4-bisphosphate) + phosphate</text>
        <dbReference type="Rhea" id="RHEA:25528"/>
        <dbReference type="ChEBI" id="CHEBI:15377"/>
        <dbReference type="ChEBI" id="CHEBI:43474"/>
        <dbReference type="ChEBI" id="CHEBI:57658"/>
        <dbReference type="ChEBI" id="CHEBI:57836"/>
        <dbReference type="EC" id="3.1.3.86"/>
    </reaction>
    <physiologicalReaction direction="left-to-right" evidence="14">
        <dbReference type="Rhea" id="RHEA:25529"/>
    </physiologicalReaction>
</comment>
<comment type="catalytic activity">
    <reaction evidence="1">
        <text>a 1,2-diacyl-sn-glycero-3-phospho-(1D-myo-inositol-3,5-bisphosphate) + H2O = a 1,2-diacyl-sn-glycero-3-phospho-(1D-myo-inositol-3-phosphate) + phosphate</text>
        <dbReference type="Rhea" id="RHEA:32955"/>
        <dbReference type="ChEBI" id="CHEBI:15377"/>
        <dbReference type="ChEBI" id="CHEBI:43474"/>
        <dbReference type="ChEBI" id="CHEBI:57923"/>
        <dbReference type="ChEBI" id="CHEBI:58088"/>
    </reaction>
    <physiologicalReaction direction="left-to-right" evidence="1">
        <dbReference type="Rhea" id="RHEA:32956"/>
    </physiologicalReaction>
</comment>
<comment type="activity regulation">
    <text evidence="4">Active in the presence of octyl-glucoside or Triton X-100, but completely inhibited by CTAB.</text>
</comment>
<comment type="biophysicochemical properties">
    <kinetics>
        <KM evidence="4">0.65 uM for phosphatidylinositol-3,4,5-trisphosphate</KM>
        <Vmax evidence="4">0.1145 umol/min/mg enzyme with phosphatidylinositol-3,4,5-trisphosphate as substrate</Vmax>
    </kinetics>
</comment>
<comment type="subunit">
    <text evidence="9">Interacts (when prenylated) with PDE6D; this is important for normal location in cilia.</text>
</comment>
<comment type="interaction">
    <interactant intactId="EBI-11900149">
        <id>Q9NRR6</id>
    </interactant>
    <interactant intactId="EBI-306940">
        <id>Q04917</id>
        <label>YWHAH</label>
    </interactant>
    <organismsDiffer>false</organismsDiffer>
    <experiments>4</experiments>
</comment>
<comment type="subcellular location">
    <subcellularLocation>
        <location evidence="5 6 9">Cytoplasm</location>
        <location evidence="5 6 9">Cytoskeleton</location>
        <location evidence="5 6 9">Cilium axoneme</location>
    </subcellularLocation>
    <subcellularLocation>
        <location evidence="1">Golgi apparatus</location>
        <location evidence="1">Golgi stack membrane</location>
        <topology evidence="1">Peripheral membrane protein</topology>
        <orientation evidence="1">Cytoplasmic side</orientation>
    </subcellularLocation>
    <subcellularLocation>
        <location evidence="2">Cell membrane</location>
        <topology evidence="2">Peripheral membrane protein</topology>
        <orientation evidence="2">Cytoplasmic side</orientation>
    </subcellularLocation>
    <subcellularLocation>
        <location evidence="2">Cell projection</location>
        <location evidence="2">Ruffle</location>
    </subcellularLocation>
    <subcellularLocation>
        <location evidence="2">Cytoplasm</location>
    </subcellularLocation>
    <subcellularLocation>
        <location evidence="1">Nucleus</location>
    </subcellularLocation>
    <text evidence="1">Peripheral membrane protein associated with Golgi stacks.</text>
</comment>
<comment type="alternative products">
    <event type="alternative splicing"/>
    <isoform>
        <id>Q9NRR6-1</id>
        <name>1</name>
        <sequence type="displayed"/>
    </isoform>
    <isoform>
        <id>Q9NRR6-2</id>
        <name>2</name>
        <sequence type="described" ref="VSP_009799"/>
    </isoform>
</comment>
<comment type="tissue specificity">
    <text evidence="4">Detected in brain, heart, pancreas, testis and spleen.</text>
</comment>
<comment type="disease" evidence="6 7 8 10">
    <disease id="DI-02532">
        <name>Joubert syndrome 1</name>
        <acronym>JBTS1</acronym>
        <description>A disorder presenting with cerebellar ataxia, oculomotor apraxia, hypotonia, neonatal breathing abnormalities and psychomotor delay. Neuroradiologically, it is characterized by cerebellar vermian hypoplasia/aplasia, thickened and reoriented superior cerebellar peduncles, and an abnormally large interpeduncular fossa, giving the appearance of a molar tooth on transaxial slices (molar tooth sign). Additional variable features include retinal dystrophy and renal disease.</description>
        <dbReference type="MIM" id="213300"/>
    </disease>
    <text>The disease is caused by variants affecting the gene represented in this entry.</text>
</comment>
<comment type="disease" evidence="5">
    <disease id="DI-02533">
        <name>Impaired intellectual development, truncal obesity, retinal dystrophy, and micropenis</name>
        <acronym>MORMS</acronym>
        <description>An autosomal recessive disorder characterized by moderate intellectual disability, truncal obesity, congenital non-progressive retinal dystrophy, and micropenis in males. The phenotype is similar to Bardet-Biedl syndrome and Cohen syndrome Distinguishing features are the age of onset, the non-progressive nature of the visual impairment, lack of dysmorphic facies, skin or gingival infection, microcephaly, mottled retina, polydactyly, and testicular anomalies.</description>
        <dbReference type="MIM" id="610156"/>
    </disease>
    <text>The disease is caused by variants affecting the gene represented in this entry.</text>
</comment>
<comment type="similarity">
    <text evidence="13">Belongs to the inositol 1,4,5-trisphosphate 5-phosphatase type IV family.</text>
</comment>
<comment type="sequence caution" evidence="13">
    <conflict type="miscellaneous discrepancy">
        <sequence resource="EMBL-CDS" id="AAB03215"/>
    </conflict>
    <text>Several sequencing problems.</text>
</comment>
<protein>
    <recommendedName>
        <fullName evidence="13">Phosphatidylinositol polyphosphate 5-phosphatase type IV</fullName>
    </recommendedName>
    <alternativeName>
        <fullName>72 kDa inositol polyphosphate 5-phosphatase</fullName>
    </alternativeName>
    <alternativeName>
        <fullName evidence="12">Inositol polyphosphate-5-phosphatase E</fullName>
    </alternativeName>
    <alternativeName>
        <fullName evidence="13">Phosphatidylinositol 4,5-bisphosphate 5-phosphatase</fullName>
        <ecNumber evidence="4 6">3.1.3.36</ecNumber>
    </alternativeName>
    <alternativeName>
        <fullName evidence="13">Phosphatidylinositol-3,4,5-trisphosphate 5-phosphatase</fullName>
        <ecNumber evidence="4">3.1.3.86</ecNumber>
    </alternativeName>
</protein>
<accession>Q9NRR6</accession>
<accession>Q15734</accession>
<accession>Q6PIV5</accession>
<gene>
    <name type="primary">INPP5E</name>
</gene>
<organism>
    <name type="scientific">Homo sapiens</name>
    <name type="common">Human</name>
    <dbReference type="NCBI Taxonomy" id="9606"/>
    <lineage>
        <taxon>Eukaryota</taxon>
        <taxon>Metazoa</taxon>
        <taxon>Chordata</taxon>
        <taxon>Craniata</taxon>
        <taxon>Vertebrata</taxon>
        <taxon>Euteleostomi</taxon>
        <taxon>Mammalia</taxon>
        <taxon>Eutheria</taxon>
        <taxon>Euarchontoglires</taxon>
        <taxon>Primates</taxon>
        <taxon>Haplorrhini</taxon>
        <taxon>Catarrhini</taxon>
        <taxon>Hominidae</taxon>
        <taxon>Homo</taxon>
    </lineage>
</organism>
<keyword id="KW-0002">3D-structure</keyword>
<keyword id="KW-0025">Alternative splicing</keyword>
<keyword id="KW-1003">Cell membrane</keyword>
<keyword id="KW-0966">Cell projection</keyword>
<keyword id="KW-1186">Ciliopathy</keyword>
<keyword id="KW-0969">Cilium</keyword>
<keyword id="KW-0963">Cytoplasm</keyword>
<keyword id="KW-0206">Cytoskeleton</keyword>
<keyword id="KW-0225">Disease variant</keyword>
<keyword id="KW-0333">Golgi apparatus</keyword>
<keyword id="KW-0378">Hydrolase</keyword>
<keyword id="KW-0991">Intellectual disability</keyword>
<keyword id="KW-0979">Joubert syndrome</keyword>
<keyword id="KW-0443">Lipid metabolism</keyword>
<keyword id="KW-0449">Lipoprotein</keyword>
<keyword id="KW-0472">Membrane</keyword>
<keyword id="KW-0488">Methylation</keyword>
<keyword id="KW-0539">Nucleus</keyword>
<keyword id="KW-0550">Obesity</keyword>
<keyword id="KW-0597">Phosphoprotein</keyword>
<keyword id="KW-0636">Prenylation</keyword>
<keyword id="KW-1267">Proteomics identification</keyword>
<keyword id="KW-1185">Reference proteome</keyword>
<keyword id="KW-0677">Repeat</keyword>